<organism>
    <name type="scientific">Prochlorococcus marinus (strain SARG / CCMP1375 / SS120)</name>
    <dbReference type="NCBI Taxonomy" id="167539"/>
    <lineage>
        <taxon>Bacteria</taxon>
        <taxon>Bacillati</taxon>
        <taxon>Cyanobacteriota</taxon>
        <taxon>Cyanophyceae</taxon>
        <taxon>Synechococcales</taxon>
        <taxon>Prochlorococcaceae</taxon>
        <taxon>Prochlorococcus</taxon>
    </lineage>
</organism>
<keyword id="KW-0032">Aminotransferase</keyword>
<keyword id="KW-0663">Pyridoxal phosphate</keyword>
<keyword id="KW-1185">Reference proteome</keyword>
<keyword id="KW-0808">Transferase</keyword>
<evidence type="ECO:0000255" key="1">
    <source>
        <dbReference type="HAMAP-Rule" id="MF_01642"/>
    </source>
</evidence>
<name>DAPAT_PROMA</name>
<gene>
    <name evidence="1" type="primary">dapL</name>
    <name type="ordered locus">Pro_1655</name>
</gene>
<sequence length="408" mass="44917">MVQVNSNYLKLKAGYLFPEISRRVNAFCELNPTASLIRLGIGDVTEPLPQACCKAMKTAIEEMGSTSGFRGYGPEQGYLWLREAIAKNDFQSRGCQISADEIFVSDGSKCDSSNILDILGTGNKIAVTDPVYPVYVDSNVMAGQTGIAASSGHYEGLVYIPLNAENGFEAELPSEPVDLIYLCFPNNPTGAVASKVQLTKWVEYAKKNHALILFDAAYESFIQDPLLPHSIFEIDGATDCAIEFRSFSKNAGFTGTRCAFTVIPKSLKGKTLDGAEVDFWSLWNRRQSTKFNGVSYIVQRGAEAVYSLEGQSQTNKLVSFYMKNAEIIRKQLTLAGYKIYGGKHAPYVWLEAPTEMDSWQFFDHLLNKANIVGTPGSGFGVAGEGYFRLSAFNSRSNVEEAMRRITSI</sequence>
<comment type="function">
    <text evidence="1">Involved in the synthesis of meso-diaminopimelate (m-DAP or DL-DAP), required for both lysine and peptidoglycan biosynthesis. Catalyzes the direct conversion of tetrahydrodipicolinate to LL-diaminopimelate.</text>
</comment>
<comment type="catalytic activity">
    <reaction evidence="1">
        <text>(2S,6S)-2,6-diaminopimelate + 2-oxoglutarate = (S)-2,3,4,5-tetrahydrodipicolinate + L-glutamate + H2O + H(+)</text>
        <dbReference type="Rhea" id="RHEA:23988"/>
        <dbReference type="ChEBI" id="CHEBI:15377"/>
        <dbReference type="ChEBI" id="CHEBI:15378"/>
        <dbReference type="ChEBI" id="CHEBI:16810"/>
        <dbReference type="ChEBI" id="CHEBI:16845"/>
        <dbReference type="ChEBI" id="CHEBI:29985"/>
        <dbReference type="ChEBI" id="CHEBI:57609"/>
        <dbReference type="EC" id="2.6.1.83"/>
    </reaction>
</comment>
<comment type="cofactor">
    <cofactor evidence="1">
        <name>pyridoxal 5'-phosphate</name>
        <dbReference type="ChEBI" id="CHEBI:597326"/>
    </cofactor>
</comment>
<comment type="pathway">
    <text evidence="1">Amino-acid biosynthesis; L-lysine biosynthesis via DAP pathway; LL-2,6-diaminopimelate from (S)-tetrahydrodipicolinate (aminotransferase route): step 1/1.</text>
</comment>
<comment type="subunit">
    <text evidence="1">Homodimer.</text>
</comment>
<comment type="similarity">
    <text evidence="1">Belongs to the class-I pyridoxal-phosphate-dependent aminotransferase family. LL-diaminopimelate aminotransferase subfamily.</text>
</comment>
<accession>Q7VA14</accession>
<feature type="chain" id="PRO_0000312533" description="LL-diaminopimelate aminotransferase">
    <location>
        <begin position="1"/>
        <end position="408"/>
    </location>
</feature>
<feature type="binding site" evidence="1">
    <location>
        <position position="15"/>
    </location>
    <ligand>
        <name>substrate</name>
    </ligand>
</feature>
<feature type="binding site" evidence="1">
    <location>
        <position position="42"/>
    </location>
    <ligand>
        <name>substrate</name>
    </ligand>
</feature>
<feature type="binding site" evidence="1">
    <location>
        <position position="72"/>
    </location>
    <ligand>
        <name>pyridoxal 5'-phosphate</name>
        <dbReference type="ChEBI" id="CHEBI:597326"/>
    </ligand>
</feature>
<feature type="binding site" evidence="1">
    <location>
        <begin position="108"/>
        <end position="109"/>
    </location>
    <ligand>
        <name>pyridoxal 5'-phosphate</name>
        <dbReference type="ChEBI" id="CHEBI:597326"/>
    </ligand>
</feature>
<feature type="binding site" evidence="1">
    <location>
        <position position="109"/>
    </location>
    <ligand>
        <name>substrate</name>
    </ligand>
</feature>
<feature type="binding site" evidence="1">
    <location>
        <position position="132"/>
    </location>
    <ligand>
        <name>pyridoxal 5'-phosphate</name>
        <dbReference type="ChEBI" id="CHEBI:597326"/>
    </ligand>
</feature>
<feature type="binding site" evidence="1">
    <location>
        <position position="132"/>
    </location>
    <ligand>
        <name>substrate</name>
    </ligand>
</feature>
<feature type="binding site" evidence="1">
    <location>
        <position position="187"/>
    </location>
    <ligand>
        <name>pyridoxal 5'-phosphate</name>
        <dbReference type="ChEBI" id="CHEBI:597326"/>
    </ligand>
</feature>
<feature type="binding site" evidence="1">
    <location>
        <position position="187"/>
    </location>
    <ligand>
        <name>substrate</name>
    </ligand>
</feature>
<feature type="binding site" evidence="1">
    <location>
        <position position="218"/>
    </location>
    <ligand>
        <name>pyridoxal 5'-phosphate</name>
        <dbReference type="ChEBI" id="CHEBI:597326"/>
    </ligand>
</feature>
<feature type="binding site" evidence="1">
    <location>
        <begin position="246"/>
        <end position="248"/>
    </location>
    <ligand>
        <name>pyridoxal 5'-phosphate</name>
        <dbReference type="ChEBI" id="CHEBI:597326"/>
    </ligand>
</feature>
<feature type="binding site" evidence="1">
    <location>
        <position position="257"/>
    </location>
    <ligand>
        <name>pyridoxal 5'-phosphate</name>
        <dbReference type="ChEBI" id="CHEBI:597326"/>
    </ligand>
</feature>
<feature type="binding site" evidence="1">
    <location>
        <position position="292"/>
    </location>
    <ligand>
        <name>pyridoxal 5'-phosphate</name>
        <dbReference type="ChEBI" id="CHEBI:597326"/>
    </ligand>
</feature>
<feature type="binding site" evidence="1">
    <location>
        <position position="292"/>
    </location>
    <ligand>
        <name>substrate</name>
    </ligand>
</feature>
<feature type="binding site" evidence="1">
    <location>
        <position position="388"/>
    </location>
    <ligand>
        <name>substrate</name>
    </ligand>
</feature>
<feature type="modified residue" description="N6-(pyridoxal phosphate)lysine" evidence="1">
    <location>
        <position position="249"/>
    </location>
</feature>
<reference key="1">
    <citation type="journal article" date="2003" name="Proc. Natl. Acad. Sci. U.S.A.">
        <title>Genome sequence of the cyanobacterium Prochlorococcus marinus SS120, a nearly minimal oxyphototrophic genome.</title>
        <authorList>
            <person name="Dufresne A."/>
            <person name="Salanoubat M."/>
            <person name="Partensky F."/>
            <person name="Artiguenave F."/>
            <person name="Axmann I.M."/>
            <person name="Barbe V."/>
            <person name="Duprat S."/>
            <person name="Galperin M.Y."/>
            <person name="Koonin E.V."/>
            <person name="Le Gall F."/>
            <person name="Makarova K.S."/>
            <person name="Ostrowski M."/>
            <person name="Oztas S."/>
            <person name="Robert C."/>
            <person name="Rogozin I.B."/>
            <person name="Scanlan D.J."/>
            <person name="Tandeau de Marsac N."/>
            <person name="Weissenbach J."/>
            <person name="Wincker P."/>
            <person name="Wolf Y.I."/>
            <person name="Hess W.R."/>
        </authorList>
    </citation>
    <scope>NUCLEOTIDE SEQUENCE [LARGE SCALE GENOMIC DNA]</scope>
    <source>
        <strain>SARG / CCMP1375 / SS120</strain>
    </source>
</reference>
<protein>
    <recommendedName>
        <fullName evidence="1">LL-diaminopimelate aminotransferase</fullName>
        <shortName evidence="1">DAP-AT</shortName>
        <shortName evidence="1">DAP-aminotransferase</shortName>
        <shortName evidence="1">LL-DAP-aminotransferase</shortName>
        <ecNumber evidence="1">2.6.1.83</ecNumber>
    </recommendedName>
</protein>
<proteinExistence type="inferred from homology"/>
<dbReference type="EC" id="2.6.1.83" evidence="1"/>
<dbReference type="EMBL" id="AE017126">
    <property type="protein sequence ID" value="AAQ00699.1"/>
    <property type="molecule type" value="Genomic_DNA"/>
</dbReference>
<dbReference type="RefSeq" id="NP_876046.1">
    <property type="nucleotide sequence ID" value="NC_005042.1"/>
</dbReference>
<dbReference type="RefSeq" id="WP_011125805.1">
    <property type="nucleotide sequence ID" value="NC_005042.1"/>
</dbReference>
<dbReference type="SMR" id="Q7VA14"/>
<dbReference type="STRING" id="167539.Pro_1655"/>
<dbReference type="EnsemblBacteria" id="AAQ00699">
    <property type="protein sequence ID" value="AAQ00699"/>
    <property type="gene ID" value="Pro_1655"/>
</dbReference>
<dbReference type="KEGG" id="pma:Pro_1655"/>
<dbReference type="PATRIC" id="fig|167539.5.peg.1748"/>
<dbReference type="eggNOG" id="COG0436">
    <property type="taxonomic scope" value="Bacteria"/>
</dbReference>
<dbReference type="HOGENOM" id="CLU_051433_0_0_3"/>
<dbReference type="OrthoDB" id="9802328at2"/>
<dbReference type="UniPathway" id="UPA00034">
    <property type="reaction ID" value="UER00466"/>
</dbReference>
<dbReference type="Proteomes" id="UP000001420">
    <property type="component" value="Chromosome"/>
</dbReference>
<dbReference type="GO" id="GO:0010285">
    <property type="term" value="F:L,L-diaminopimelate aminotransferase activity"/>
    <property type="evidence" value="ECO:0007669"/>
    <property type="project" value="UniProtKB-UniRule"/>
</dbReference>
<dbReference type="GO" id="GO:0030170">
    <property type="term" value="F:pyridoxal phosphate binding"/>
    <property type="evidence" value="ECO:0007669"/>
    <property type="project" value="UniProtKB-UniRule"/>
</dbReference>
<dbReference type="GO" id="GO:0033362">
    <property type="term" value="P:lysine biosynthetic process via diaminopimelate, diaminopimelate-aminotransferase pathway"/>
    <property type="evidence" value="ECO:0007669"/>
    <property type="project" value="UniProtKB-UniRule"/>
</dbReference>
<dbReference type="CDD" id="cd00609">
    <property type="entry name" value="AAT_like"/>
    <property type="match status" value="1"/>
</dbReference>
<dbReference type="FunFam" id="3.40.640.10:FF:000099">
    <property type="entry name" value="LL-diaminopimelate aminotransferase, chloroplastic"/>
    <property type="match status" value="1"/>
</dbReference>
<dbReference type="Gene3D" id="3.90.1150.10">
    <property type="entry name" value="Aspartate Aminotransferase, domain 1"/>
    <property type="match status" value="1"/>
</dbReference>
<dbReference type="Gene3D" id="3.40.640.10">
    <property type="entry name" value="Type I PLP-dependent aspartate aminotransferase-like (Major domain)"/>
    <property type="match status" value="1"/>
</dbReference>
<dbReference type="HAMAP" id="MF_01642">
    <property type="entry name" value="DapL_aminotrans_1"/>
    <property type="match status" value="1"/>
</dbReference>
<dbReference type="InterPro" id="IPR004839">
    <property type="entry name" value="Aminotransferase_I/II_large"/>
</dbReference>
<dbReference type="InterPro" id="IPR019942">
    <property type="entry name" value="DapL/ALD1"/>
</dbReference>
<dbReference type="InterPro" id="IPR015424">
    <property type="entry name" value="PyrdxlP-dep_Trfase"/>
</dbReference>
<dbReference type="InterPro" id="IPR015421">
    <property type="entry name" value="PyrdxlP-dep_Trfase_major"/>
</dbReference>
<dbReference type="InterPro" id="IPR015422">
    <property type="entry name" value="PyrdxlP-dep_Trfase_small"/>
</dbReference>
<dbReference type="NCBIfam" id="TIGR03542">
    <property type="entry name" value="DAPAT_plant"/>
    <property type="match status" value="1"/>
</dbReference>
<dbReference type="PANTHER" id="PTHR43144">
    <property type="entry name" value="AMINOTRANSFERASE"/>
    <property type="match status" value="1"/>
</dbReference>
<dbReference type="Pfam" id="PF00155">
    <property type="entry name" value="Aminotran_1_2"/>
    <property type="match status" value="1"/>
</dbReference>
<dbReference type="SUPFAM" id="SSF53383">
    <property type="entry name" value="PLP-dependent transferases"/>
    <property type="match status" value="1"/>
</dbReference>